<protein>
    <recommendedName>
        <fullName evidence="1">Small ribosomal subunit protein eS6</fullName>
    </recommendedName>
    <alternativeName>
        <fullName evidence="2">30S ribosomal protein S6e</fullName>
    </alternativeName>
</protein>
<comment type="similarity">
    <text evidence="1">Belongs to the eukaryotic ribosomal protein eS6 family.</text>
</comment>
<reference key="1">
    <citation type="journal article" date="2000" name="Nature">
        <title>The genome sequence of the thermoacidophilic scavenger Thermoplasma acidophilum.</title>
        <authorList>
            <person name="Ruepp A."/>
            <person name="Graml W."/>
            <person name="Santos-Martinez M.-L."/>
            <person name="Koretke K.K."/>
            <person name="Volker C."/>
            <person name="Mewes H.-W."/>
            <person name="Frishman D."/>
            <person name="Stocker S."/>
            <person name="Lupas A.N."/>
            <person name="Baumeister W."/>
        </authorList>
    </citation>
    <scope>NUCLEOTIDE SEQUENCE [LARGE SCALE GENOMIC DNA]</scope>
    <source>
        <strain>ATCC 25905 / DSM 1728 / JCM 9062 / NBRC 15155 / AMRC-C165</strain>
    </source>
</reference>
<gene>
    <name evidence="1" type="primary">rps6e</name>
    <name type="ordered locus">Ta0323</name>
</gene>
<sequence length="124" mass="13647">MAIIADPKTGKTYKKEIPAERMGSLVGRKIGDEIDGVFFDLVGYKLVVTGGSSIDGFPMRSDLQTQGKKQILVSYKKGYRGKNGIRKRITVRGSIIGSDISQINLKIVQYGPTPLEEKKDDQQA</sequence>
<name>RS6E_THEAC</name>
<feature type="chain" id="PRO_0000137363" description="Small ribosomal subunit protein eS6">
    <location>
        <begin position="1"/>
        <end position="124"/>
    </location>
</feature>
<accession>Q9HLA6</accession>
<proteinExistence type="inferred from homology"/>
<keyword id="KW-1185">Reference proteome</keyword>
<keyword id="KW-0687">Ribonucleoprotein</keyword>
<keyword id="KW-0689">Ribosomal protein</keyword>
<dbReference type="EMBL" id="AL445063">
    <property type="protein sequence ID" value="CAC11468.1"/>
    <property type="molecule type" value="Genomic_DNA"/>
</dbReference>
<dbReference type="SMR" id="Q9HLA6"/>
<dbReference type="STRING" id="273075.gene:9571541"/>
<dbReference type="PaxDb" id="273075-Ta0323m"/>
<dbReference type="EnsemblBacteria" id="CAC11468">
    <property type="protein sequence ID" value="CAC11468"/>
    <property type="gene ID" value="CAC11468"/>
</dbReference>
<dbReference type="KEGG" id="tac:Ta0323"/>
<dbReference type="eggNOG" id="arCOG01946">
    <property type="taxonomic scope" value="Archaea"/>
</dbReference>
<dbReference type="HOGENOM" id="CLU_109671_1_1_2"/>
<dbReference type="InParanoid" id="Q9HLA6"/>
<dbReference type="Proteomes" id="UP000001024">
    <property type="component" value="Chromosome"/>
</dbReference>
<dbReference type="GO" id="GO:1990904">
    <property type="term" value="C:ribonucleoprotein complex"/>
    <property type="evidence" value="ECO:0007669"/>
    <property type="project" value="UniProtKB-KW"/>
</dbReference>
<dbReference type="GO" id="GO:0005840">
    <property type="term" value="C:ribosome"/>
    <property type="evidence" value="ECO:0007669"/>
    <property type="project" value="UniProtKB-KW"/>
</dbReference>
<dbReference type="GO" id="GO:0003735">
    <property type="term" value="F:structural constituent of ribosome"/>
    <property type="evidence" value="ECO:0007669"/>
    <property type="project" value="InterPro"/>
</dbReference>
<dbReference type="GO" id="GO:0006412">
    <property type="term" value="P:translation"/>
    <property type="evidence" value="ECO:0007669"/>
    <property type="project" value="UniProtKB-UniRule"/>
</dbReference>
<dbReference type="HAMAP" id="MF_00512">
    <property type="entry name" value="Ribosomal_eS6"/>
    <property type="match status" value="1"/>
</dbReference>
<dbReference type="InterPro" id="IPR001377">
    <property type="entry name" value="Ribosomal_eS6"/>
</dbReference>
<dbReference type="InterPro" id="IPR020924">
    <property type="entry name" value="Ribosomal_eS6_arc"/>
</dbReference>
<dbReference type="NCBIfam" id="NF003294">
    <property type="entry name" value="PRK04290.1-3"/>
    <property type="match status" value="1"/>
</dbReference>
<dbReference type="PANTHER" id="PTHR11502">
    <property type="entry name" value="40S RIBOSOMAL PROTEIN S6"/>
    <property type="match status" value="1"/>
</dbReference>
<dbReference type="Pfam" id="PF01092">
    <property type="entry name" value="Ribosomal_S6e"/>
    <property type="match status" value="1"/>
</dbReference>
<dbReference type="SMART" id="SM01405">
    <property type="entry name" value="Ribosomal_S6e"/>
    <property type="match status" value="1"/>
</dbReference>
<evidence type="ECO:0000255" key="1">
    <source>
        <dbReference type="HAMAP-Rule" id="MF_00512"/>
    </source>
</evidence>
<evidence type="ECO:0000305" key="2"/>
<organism>
    <name type="scientific">Thermoplasma acidophilum (strain ATCC 25905 / DSM 1728 / JCM 9062 / NBRC 15155 / AMRC-C165)</name>
    <dbReference type="NCBI Taxonomy" id="273075"/>
    <lineage>
        <taxon>Archaea</taxon>
        <taxon>Methanobacteriati</taxon>
        <taxon>Thermoplasmatota</taxon>
        <taxon>Thermoplasmata</taxon>
        <taxon>Thermoplasmatales</taxon>
        <taxon>Thermoplasmataceae</taxon>
        <taxon>Thermoplasma</taxon>
    </lineage>
</organism>